<sequence>MKIKILFFLALPFLAYASEHGGTNYDIVERTLNFLLFFAILVYFAAKPLKALYQSRIDRIANKLESIQEKLRESKAKKDDVLKRVEEAKQNANALIETAKKEAVNLAAKVKKEAQNDIANIEKGYKEQKEFEERKMTKGVVNEILSDIFSSDSLKVDQKELVNIILKKVS</sequence>
<name>ATPF_CAMC1</name>
<comment type="function">
    <text evidence="1">F(1)F(0) ATP synthase produces ATP from ADP in the presence of a proton or sodium gradient. F-type ATPases consist of two structural domains, F(1) containing the extramembraneous catalytic core and F(0) containing the membrane proton channel, linked together by a central stalk and a peripheral stalk. During catalysis, ATP synthesis in the catalytic domain of F(1) is coupled via a rotary mechanism of the central stalk subunits to proton translocation.</text>
</comment>
<comment type="function">
    <text evidence="1">Component of the F(0) channel, it forms part of the peripheral stalk, linking F(1) to F(0).</text>
</comment>
<comment type="subunit">
    <text evidence="1">F-type ATPases have 2 components, F(1) - the catalytic core - and F(0) - the membrane proton channel. F(1) has five subunits: alpha(3), beta(3), gamma(1), delta(1), epsilon(1). F(0) has three main subunits: a(1), b(2) and c(10-14). The alpha and beta chains form an alternating ring which encloses part of the gamma chain. F(1) is attached to F(0) by a central stalk formed by the gamma and epsilon chains, while a peripheral stalk is formed by the delta and b chains.</text>
</comment>
<comment type="subcellular location">
    <subcellularLocation>
        <location evidence="1">Cell inner membrane</location>
        <topology evidence="1">Single-pass membrane protein</topology>
    </subcellularLocation>
</comment>
<comment type="similarity">
    <text evidence="1">Belongs to the ATPase B chain family.</text>
</comment>
<dbReference type="EMBL" id="CP000792">
    <property type="protein sequence ID" value="EAT97442.1"/>
    <property type="molecule type" value="Genomic_DNA"/>
</dbReference>
<dbReference type="RefSeq" id="WP_012001332.1">
    <property type="nucleotide sequence ID" value="NC_009802.2"/>
</dbReference>
<dbReference type="SMR" id="A7ZC33"/>
<dbReference type="STRING" id="360104.CCC13826_0913"/>
<dbReference type="KEGG" id="cco:CCC13826_0913"/>
<dbReference type="eggNOG" id="COG0711">
    <property type="taxonomic scope" value="Bacteria"/>
</dbReference>
<dbReference type="HOGENOM" id="CLU_129781_0_0_7"/>
<dbReference type="OrthoDB" id="5373033at2"/>
<dbReference type="Proteomes" id="UP000001121">
    <property type="component" value="Chromosome"/>
</dbReference>
<dbReference type="GO" id="GO:0005886">
    <property type="term" value="C:plasma membrane"/>
    <property type="evidence" value="ECO:0007669"/>
    <property type="project" value="UniProtKB-SubCell"/>
</dbReference>
<dbReference type="GO" id="GO:0045259">
    <property type="term" value="C:proton-transporting ATP synthase complex"/>
    <property type="evidence" value="ECO:0007669"/>
    <property type="project" value="UniProtKB-KW"/>
</dbReference>
<dbReference type="GO" id="GO:0046933">
    <property type="term" value="F:proton-transporting ATP synthase activity, rotational mechanism"/>
    <property type="evidence" value="ECO:0007669"/>
    <property type="project" value="UniProtKB-UniRule"/>
</dbReference>
<dbReference type="GO" id="GO:0046961">
    <property type="term" value="F:proton-transporting ATPase activity, rotational mechanism"/>
    <property type="evidence" value="ECO:0007669"/>
    <property type="project" value="TreeGrafter"/>
</dbReference>
<dbReference type="CDD" id="cd06503">
    <property type="entry name" value="ATP-synt_Fo_b"/>
    <property type="match status" value="1"/>
</dbReference>
<dbReference type="HAMAP" id="MF_01398">
    <property type="entry name" value="ATP_synth_b_bprime"/>
    <property type="match status" value="1"/>
</dbReference>
<dbReference type="InterPro" id="IPR002146">
    <property type="entry name" value="ATP_synth_b/b'su_bac/chlpt"/>
</dbReference>
<dbReference type="InterPro" id="IPR050059">
    <property type="entry name" value="ATP_synthase_B_chain"/>
</dbReference>
<dbReference type="NCBIfam" id="NF006292">
    <property type="entry name" value="PRK08475.1"/>
    <property type="match status" value="1"/>
</dbReference>
<dbReference type="PANTHER" id="PTHR33445:SF1">
    <property type="entry name" value="ATP SYNTHASE SUBUNIT B"/>
    <property type="match status" value="1"/>
</dbReference>
<dbReference type="PANTHER" id="PTHR33445">
    <property type="entry name" value="ATP SYNTHASE SUBUNIT B', CHLOROPLASTIC"/>
    <property type="match status" value="1"/>
</dbReference>
<dbReference type="Pfam" id="PF00430">
    <property type="entry name" value="ATP-synt_B"/>
    <property type="match status" value="1"/>
</dbReference>
<feature type="chain" id="PRO_0000368400" description="ATP synthase subunit b">
    <location>
        <begin position="1"/>
        <end position="170"/>
    </location>
</feature>
<feature type="transmembrane region" description="Helical" evidence="1">
    <location>
        <begin position="3"/>
        <end position="23"/>
    </location>
</feature>
<keyword id="KW-0066">ATP synthesis</keyword>
<keyword id="KW-0997">Cell inner membrane</keyword>
<keyword id="KW-1003">Cell membrane</keyword>
<keyword id="KW-0138">CF(0)</keyword>
<keyword id="KW-0375">Hydrogen ion transport</keyword>
<keyword id="KW-0406">Ion transport</keyword>
<keyword id="KW-0472">Membrane</keyword>
<keyword id="KW-0812">Transmembrane</keyword>
<keyword id="KW-1133">Transmembrane helix</keyword>
<keyword id="KW-0813">Transport</keyword>
<protein>
    <recommendedName>
        <fullName evidence="1">ATP synthase subunit b</fullName>
    </recommendedName>
    <alternativeName>
        <fullName evidence="1">ATP synthase F(0) sector subunit b</fullName>
    </alternativeName>
    <alternativeName>
        <fullName evidence="1">ATPase subunit I</fullName>
    </alternativeName>
    <alternativeName>
        <fullName evidence="1">F-type ATPase subunit b</fullName>
        <shortName evidence="1">F-ATPase subunit b</shortName>
    </alternativeName>
</protein>
<evidence type="ECO:0000255" key="1">
    <source>
        <dbReference type="HAMAP-Rule" id="MF_01398"/>
    </source>
</evidence>
<accession>A7ZC33</accession>
<gene>
    <name evidence="1" type="primary">atpF</name>
    <name type="ordered locus">Ccon26_04400</name>
    <name type="ORF">CCC13826_0913</name>
</gene>
<reference key="1">
    <citation type="submission" date="2007-10" db="EMBL/GenBank/DDBJ databases">
        <title>Genome sequence of Campylobacter concisus 13826 isolated from human feces.</title>
        <authorList>
            <person name="Fouts D.E."/>
            <person name="Mongodin E.F."/>
            <person name="Puiu D."/>
            <person name="Sebastian Y."/>
            <person name="Miller W.G."/>
            <person name="Mandrell R.E."/>
            <person name="On S."/>
            <person name="Nelson K.E."/>
        </authorList>
    </citation>
    <scope>NUCLEOTIDE SEQUENCE [LARGE SCALE GENOMIC DNA]</scope>
    <source>
        <strain>13826</strain>
    </source>
</reference>
<organism>
    <name type="scientific">Campylobacter concisus (strain 13826)</name>
    <dbReference type="NCBI Taxonomy" id="360104"/>
    <lineage>
        <taxon>Bacteria</taxon>
        <taxon>Pseudomonadati</taxon>
        <taxon>Campylobacterota</taxon>
        <taxon>Epsilonproteobacteria</taxon>
        <taxon>Campylobacterales</taxon>
        <taxon>Campylobacteraceae</taxon>
        <taxon>Campylobacter</taxon>
    </lineage>
</organism>
<proteinExistence type="inferred from homology"/>